<accession>A8I2V9</accession>
<keyword id="KW-0004">4Fe-4S</keyword>
<keyword id="KW-0150">Chloroplast</keyword>
<keyword id="KW-0408">Iron</keyword>
<keyword id="KW-0411">Iron-sulfur</keyword>
<keyword id="KW-0479">Metal-binding</keyword>
<keyword id="KW-0934">Plastid</keyword>
<keyword id="KW-0949">S-adenosyl-L-methionine</keyword>
<keyword id="KW-0808">Transferase</keyword>
<keyword id="KW-0809">Transit peptide</keyword>
<organism>
    <name type="scientific">Chlamydomonas reinhardtii</name>
    <name type="common">Chlamydomonas smithii</name>
    <dbReference type="NCBI Taxonomy" id="3055"/>
    <lineage>
        <taxon>Eukaryota</taxon>
        <taxon>Viridiplantae</taxon>
        <taxon>Chlorophyta</taxon>
        <taxon>core chlorophytes</taxon>
        <taxon>Chlorophyceae</taxon>
        <taxon>CS clade</taxon>
        <taxon>Chlamydomonadales</taxon>
        <taxon>Chlamydomonadaceae</taxon>
        <taxon>Chlamydomonas</taxon>
    </lineage>
</organism>
<comment type="function">
    <text evidence="1">Catalyzes the radical-mediated insertion of two sulfur atoms into the C-6 and C-8 positions of the octanoyl moiety bound to the lipoyl domains of lipoate-dependent enzymes, thereby converting the octanoylated domains into lipoylated derivatives.</text>
</comment>
<comment type="catalytic activity">
    <reaction evidence="1">
        <text>[[Fe-S] cluster scaffold protein carrying a second [4Fe-4S](2+) cluster] + N(6)-octanoyl-L-lysyl-[protein] + 2 oxidized [2Fe-2S]-[ferredoxin] + 2 S-adenosyl-L-methionine + 4 H(+) = [[Fe-S] cluster scaffold protein] + N(6)-[(R)-dihydrolipoyl]-L-lysyl-[protein] + 4 Fe(3+) + 2 hydrogen sulfide + 2 5'-deoxyadenosine + 2 L-methionine + 2 reduced [2Fe-2S]-[ferredoxin]</text>
        <dbReference type="Rhea" id="RHEA:16585"/>
        <dbReference type="Rhea" id="RHEA-COMP:9928"/>
        <dbReference type="Rhea" id="RHEA-COMP:10000"/>
        <dbReference type="Rhea" id="RHEA-COMP:10001"/>
        <dbReference type="Rhea" id="RHEA-COMP:10475"/>
        <dbReference type="Rhea" id="RHEA-COMP:14568"/>
        <dbReference type="Rhea" id="RHEA-COMP:14569"/>
        <dbReference type="ChEBI" id="CHEBI:15378"/>
        <dbReference type="ChEBI" id="CHEBI:17319"/>
        <dbReference type="ChEBI" id="CHEBI:29034"/>
        <dbReference type="ChEBI" id="CHEBI:29919"/>
        <dbReference type="ChEBI" id="CHEBI:33722"/>
        <dbReference type="ChEBI" id="CHEBI:33737"/>
        <dbReference type="ChEBI" id="CHEBI:33738"/>
        <dbReference type="ChEBI" id="CHEBI:57844"/>
        <dbReference type="ChEBI" id="CHEBI:59789"/>
        <dbReference type="ChEBI" id="CHEBI:78809"/>
        <dbReference type="ChEBI" id="CHEBI:83100"/>
        <dbReference type="EC" id="2.8.1.8"/>
    </reaction>
</comment>
<comment type="cofactor">
    <cofactor evidence="1">
        <name>[4Fe-4S] cluster</name>
        <dbReference type="ChEBI" id="CHEBI:49883"/>
    </cofactor>
    <text evidence="1">Binds 2 [4Fe-4S] clusters per subunit. One cluster is coordinated with 3 cysteines and an exchangeable S-adenosyl-L-methionine.</text>
</comment>
<comment type="pathway">
    <text evidence="1">Protein modification; protein lipoylation via endogenous pathway; protein N(6)-(lipoyl)lysine from octanoyl-[acyl-carrier-protein]: step 2/2.</text>
</comment>
<comment type="subcellular location">
    <subcellularLocation>
        <location evidence="1">Plastid</location>
        <location evidence="1">Chloroplast</location>
    </subcellularLocation>
</comment>
<comment type="similarity">
    <text evidence="1">Belongs to the radical SAM superfamily. Lipoyl synthase family.</text>
</comment>
<reference key="1">
    <citation type="journal article" date="2007" name="Science">
        <title>The Chlamydomonas genome reveals the evolution of key animal and plant functions.</title>
        <authorList>
            <person name="Merchant S.S."/>
            <person name="Prochnik S.E."/>
            <person name="Vallon O."/>
            <person name="Harris E.H."/>
            <person name="Karpowicz S.J."/>
            <person name="Witman G.B."/>
            <person name="Terry A."/>
            <person name="Salamov A."/>
            <person name="Fritz-Laylin L.K."/>
            <person name="Marechal-Drouard L."/>
            <person name="Marshall W.F."/>
            <person name="Qu L.H."/>
            <person name="Nelson D.R."/>
            <person name="Sanderfoot A.A."/>
            <person name="Spalding M.H."/>
            <person name="Kapitonov V.V."/>
            <person name="Ren Q."/>
            <person name="Ferris P."/>
            <person name="Lindquist E."/>
            <person name="Shapiro H."/>
            <person name="Lucas S.M."/>
            <person name="Grimwood J."/>
            <person name="Schmutz J."/>
            <person name="Cardol P."/>
            <person name="Cerutti H."/>
            <person name="Chanfreau G."/>
            <person name="Chen C.L."/>
            <person name="Cognat V."/>
            <person name="Croft M.T."/>
            <person name="Dent R."/>
            <person name="Dutcher S."/>
            <person name="Fernandez E."/>
            <person name="Fukuzawa H."/>
            <person name="Gonzalez-Ballester D."/>
            <person name="Gonzalez-Halphen D."/>
            <person name="Hallmann A."/>
            <person name="Hanikenne M."/>
            <person name="Hippler M."/>
            <person name="Inwood W."/>
            <person name="Jabbari K."/>
            <person name="Kalanon M."/>
            <person name="Kuras R."/>
            <person name="Lefebvre P.A."/>
            <person name="Lemaire S.D."/>
            <person name="Lobanov A.V."/>
            <person name="Lohr M."/>
            <person name="Manuell A."/>
            <person name="Meier I."/>
            <person name="Mets L."/>
            <person name="Mittag M."/>
            <person name="Mittelmeier T."/>
            <person name="Moroney J.V."/>
            <person name="Moseley J."/>
            <person name="Napoli C."/>
            <person name="Nedelcu A.M."/>
            <person name="Niyogi K."/>
            <person name="Novoselov S.V."/>
            <person name="Paulsen I.T."/>
            <person name="Pazour G.J."/>
            <person name="Purton S."/>
            <person name="Ral J.P."/>
            <person name="Riano-Pachon D.M."/>
            <person name="Riekhof W."/>
            <person name="Rymarquis L."/>
            <person name="Schroda M."/>
            <person name="Stern D."/>
            <person name="Umen J."/>
            <person name="Willows R."/>
            <person name="Wilson N."/>
            <person name="Zimmer S.L."/>
            <person name="Allmer J."/>
            <person name="Balk J."/>
            <person name="Bisova K."/>
            <person name="Chen C.J."/>
            <person name="Elias M."/>
            <person name="Gendler K."/>
            <person name="Hauser C."/>
            <person name="Lamb M.R."/>
            <person name="Ledford H."/>
            <person name="Long J.C."/>
            <person name="Minagawa J."/>
            <person name="Page M.D."/>
            <person name="Pan J."/>
            <person name="Pootakham W."/>
            <person name="Roje S."/>
            <person name="Rose A."/>
            <person name="Stahlberg E."/>
            <person name="Terauchi A.M."/>
            <person name="Yang P."/>
            <person name="Ball S."/>
            <person name="Bowler C."/>
            <person name="Dieckmann C.L."/>
            <person name="Gladyshev V.N."/>
            <person name="Green P."/>
            <person name="Jorgensen R."/>
            <person name="Mayfield S."/>
            <person name="Mueller-Roeber B."/>
            <person name="Rajamani S."/>
            <person name="Sayre R.T."/>
            <person name="Brokstein P."/>
            <person name="Dubchak I."/>
            <person name="Goodstein D."/>
            <person name="Hornick L."/>
            <person name="Huang Y.W."/>
            <person name="Jhaveri J."/>
            <person name="Luo Y."/>
            <person name="Martinez D."/>
            <person name="Ngau W.C."/>
            <person name="Otillar B."/>
            <person name="Poliakov A."/>
            <person name="Porter A."/>
            <person name="Szajkowski L."/>
            <person name="Werner G."/>
            <person name="Zhou K."/>
            <person name="Grigoriev I.V."/>
            <person name="Rokhsar D.S."/>
            <person name="Grossman A.R."/>
        </authorList>
    </citation>
    <scope>NUCLEOTIDE SEQUENCE [LARGE SCALE GENOMIC DNA]</scope>
    <source>
        <strain>CC-503</strain>
        <strain>cw92</strain>
    </source>
</reference>
<sequence length="430" mass="46680">MRSLATLHQSPASCSRSAPVAPCPARRANSSRRVARQGPRARASSPVVETESEDVDITPQIDAFEELVRLAVEKDPSLATLAEQHLRSKSKSAAPVSPFAAPSPGSPSASSMLGPSLGALPNQNKPAWLRQRAPQGEIYSGLKDQLRGLKLATVCEEAQCPNIGECWNGELATATIMLLGDTCTRGCRFCAVNTARTPPPPDPNEPVNTATAVASWGVGYVVLTSVDRDDMPDGGSEHFAATVRTLKQLRPGILVECLTPDFKGDLDAVRHLARSGLDVYAHNVETVERLQKRVRDPRAGYMQTLDVLRAAKECGVYTKSSIMLGLGETDDEVIDTMLDLKAVGVDIFTLGQYLQPTPHHLPVTEFVTPEKFEYWRKFGQEEIGFRYVASGPMVRSSYKAGEFFLHSMIESDRAKARAAQEGAAGRVRPL</sequence>
<name>LISC_CHLRE</name>
<feature type="transit peptide" description="Chloroplast" evidence="1">
    <location>
        <begin position="1"/>
        <end position="40"/>
    </location>
</feature>
<feature type="chain" id="PRO_0000398859" description="Lipoyl synthase, chloroplastic">
    <location>
        <begin position="41"/>
        <end position="430"/>
    </location>
</feature>
<feature type="domain" description="Radical SAM core" evidence="2">
    <location>
        <begin position="166"/>
        <end position="386"/>
    </location>
</feature>
<feature type="region of interest" description="Disordered" evidence="3">
    <location>
        <begin position="1"/>
        <end position="55"/>
    </location>
</feature>
<feature type="region of interest" description="Disordered" evidence="3">
    <location>
        <begin position="85"/>
        <end position="119"/>
    </location>
</feature>
<feature type="compositionally biased region" description="Polar residues" evidence="3">
    <location>
        <begin position="1"/>
        <end position="16"/>
    </location>
</feature>
<feature type="compositionally biased region" description="Low complexity" evidence="3">
    <location>
        <begin position="91"/>
        <end position="119"/>
    </location>
</feature>
<feature type="binding site" evidence="1">
    <location>
        <position position="155"/>
    </location>
    <ligand>
        <name>[4Fe-4S] cluster</name>
        <dbReference type="ChEBI" id="CHEBI:49883"/>
        <label>1</label>
    </ligand>
</feature>
<feature type="binding site" evidence="1">
    <location>
        <position position="160"/>
    </location>
    <ligand>
        <name>[4Fe-4S] cluster</name>
        <dbReference type="ChEBI" id="CHEBI:49883"/>
        <label>1</label>
    </ligand>
</feature>
<feature type="binding site" evidence="1">
    <location>
        <position position="166"/>
    </location>
    <ligand>
        <name>[4Fe-4S] cluster</name>
        <dbReference type="ChEBI" id="CHEBI:49883"/>
        <label>1</label>
    </ligand>
</feature>
<feature type="binding site" evidence="1">
    <location>
        <position position="183"/>
    </location>
    <ligand>
        <name>[4Fe-4S] cluster</name>
        <dbReference type="ChEBI" id="CHEBI:49883"/>
        <label>2</label>
        <note>4Fe-4S-S-AdoMet</note>
    </ligand>
</feature>
<feature type="binding site" evidence="1">
    <location>
        <position position="187"/>
    </location>
    <ligand>
        <name>[4Fe-4S] cluster</name>
        <dbReference type="ChEBI" id="CHEBI:49883"/>
        <label>2</label>
        <note>4Fe-4S-S-AdoMet</note>
    </ligand>
</feature>
<feature type="binding site" evidence="1">
    <location>
        <position position="190"/>
    </location>
    <ligand>
        <name>[4Fe-4S] cluster</name>
        <dbReference type="ChEBI" id="CHEBI:49883"/>
        <label>2</label>
        <note>4Fe-4S-S-AdoMet</note>
    </ligand>
</feature>
<feature type="binding site" evidence="1">
    <location>
        <position position="397"/>
    </location>
    <ligand>
        <name>[4Fe-4S] cluster</name>
        <dbReference type="ChEBI" id="CHEBI:49883"/>
        <label>1</label>
    </ligand>
</feature>
<proteinExistence type="inferred from homology"/>
<dbReference type="EC" id="2.8.1.8" evidence="1"/>
<dbReference type="EMBL" id="DS496112">
    <property type="protein sequence ID" value="EDP07358.1"/>
    <property type="molecule type" value="Genomic_DNA"/>
</dbReference>
<dbReference type="RefSeq" id="XP_001699662.1">
    <property type="nucleotide sequence ID" value="XM_001699610.1"/>
</dbReference>
<dbReference type="SMR" id="A8I2V9"/>
<dbReference type="PaxDb" id="3055-EDP07358"/>
<dbReference type="EnsemblPlants" id="PNW87235">
    <property type="protein sequence ID" value="PNW87235"/>
    <property type="gene ID" value="CHLRE_02g114400v5"/>
</dbReference>
<dbReference type="GeneID" id="5725443"/>
<dbReference type="Gramene" id="PNW87235">
    <property type="protein sequence ID" value="PNW87235"/>
    <property type="gene ID" value="CHLRE_02g114400v5"/>
</dbReference>
<dbReference type="KEGG" id="cre:CHLRE_02g114400v5"/>
<dbReference type="eggNOG" id="KOG2672">
    <property type="taxonomic scope" value="Eukaryota"/>
</dbReference>
<dbReference type="HOGENOM" id="CLU_033144_2_0_1"/>
<dbReference type="OMA" id="TWIRCEI"/>
<dbReference type="OrthoDB" id="3231at2759"/>
<dbReference type="UniPathway" id="UPA00538">
    <property type="reaction ID" value="UER00593"/>
</dbReference>
<dbReference type="GO" id="GO:0009507">
    <property type="term" value="C:chloroplast"/>
    <property type="evidence" value="ECO:0007669"/>
    <property type="project" value="UniProtKB-SubCell"/>
</dbReference>
<dbReference type="GO" id="GO:0051539">
    <property type="term" value="F:4 iron, 4 sulfur cluster binding"/>
    <property type="evidence" value="ECO:0007669"/>
    <property type="project" value="UniProtKB-UniRule"/>
</dbReference>
<dbReference type="GO" id="GO:0016992">
    <property type="term" value="F:lipoate synthase activity"/>
    <property type="evidence" value="ECO:0007669"/>
    <property type="project" value="UniProtKB-UniRule"/>
</dbReference>
<dbReference type="GO" id="GO:0046872">
    <property type="term" value="F:metal ion binding"/>
    <property type="evidence" value="ECO:0007669"/>
    <property type="project" value="UniProtKB-KW"/>
</dbReference>
<dbReference type="CDD" id="cd01335">
    <property type="entry name" value="Radical_SAM"/>
    <property type="match status" value="1"/>
</dbReference>
<dbReference type="FunFam" id="3.20.20.70:FF:000036">
    <property type="entry name" value="Lipoyl synthase, mitochondrial"/>
    <property type="match status" value="1"/>
</dbReference>
<dbReference type="Gene3D" id="3.20.20.70">
    <property type="entry name" value="Aldolase class I"/>
    <property type="match status" value="1"/>
</dbReference>
<dbReference type="HAMAP" id="MF_00206">
    <property type="entry name" value="Lipoyl_synth"/>
    <property type="match status" value="1"/>
</dbReference>
<dbReference type="HAMAP" id="MF_03129">
    <property type="entry name" value="Lipoyl_synth_plantC"/>
    <property type="match status" value="1"/>
</dbReference>
<dbReference type="InterPro" id="IPR013785">
    <property type="entry name" value="Aldolase_TIM"/>
</dbReference>
<dbReference type="InterPro" id="IPR006638">
    <property type="entry name" value="Elp3/MiaA/NifB-like_rSAM"/>
</dbReference>
<dbReference type="InterPro" id="IPR031691">
    <property type="entry name" value="LIAS_N"/>
</dbReference>
<dbReference type="InterPro" id="IPR003698">
    <property type="entry name" value="Lipoyl_synth"/>
</dbReference>
<dbReference type="InterPro" id="IPR027526">
    <property type="entry name" value="Lipoyl_synth_chlpt"/>
</dbReference>
<dbReference type="InterPro" id="IPR007197">
    <property type="entry name" value="rSAM"/>
</dbReference>
<dbReference type="NCBIfam" id="TIGR00510">
    <property type="entry name" value="lipA"/>
    <property type="match status" value="1"/>
</dbReference>
<dbReference type="NCBIfam" id="NF004019">
    <property type="entry name" value="PRK05481.1"/>
    <property type="match status" value="1"/>
</dbReference>
<dbReference type="NCBIfam" id="NF009544">
    <property type="entry name" value="PRK12928.1"/>
    <property type="match status" value="1"/>
</dbReference>
<dbReference type="PANTHER" id="PTHR10949">
    <property type="entry name" value="LIPOYL SYNTHASE"/>
    <property type="match status" value="1"/>
</dbReference>
<dbReference type="PANTHER" id="PTHR10949:SF38">
    <property type="entry name" value="LIPOYL SYNTHASE, CHLOROPLASTIC"/>
    <property type="match status" value="1"/>
</dbReference>
<dbReference type="Pfam" id="PF16881">
    <property type="entry name" value="LIAS_N"/>
    <property type="match status" value="1"/>
</dbReference>
<dbReference type="Pfam" id="PF04055">
    <property type="entry name" value="Radical_SAM"/>
    <property type="match status" value="1"/>
</dbReference>
<dbReference type="SFLD" id="SFLDF00271">
    <property type="entry name" value="lipoyl_synthase"/>
    <property type="match status" value="1"/>
</dbReference>
<dbReference type="SFLD" id="SFLDG01058">
    <property type="entry name" value="lipoyl_synthase_like"/>
    <property type="match status" value="1"/>
</dbReference>
<dbReference type="SMART" id="SM00729">
    <property type="entry name" value="Elp3"/>
    <property type="match status" value="1"/>
</dbReference>
<dbReference type="SUPFAM" id="SSF102114">
    <property type="entry name" value="Radical SAM enzymes"/>
    <property type="match status" value="1"/>
</dbReference>
<dbReference type="PROSITE" id="PS51918">
    <property type="entry name" value="RADICAL_SAM"/>
    <property type="match status" value="1"/>
</dbReference>
<evidence type="ECO:0000255" key="1">
    <source>
        <dbReference type="HAMAP-Rule" id="MF_03129"/>
    </source>
</evidence>
<evidence type="ECO:0000255" key="2">
    <source>
        <dbReference type="PROSITE-ProRule" id="PRU01266"/>
    </source>
</evidence>
<evidence type="ECO:0000256" key="3">
    <source>
        <dbReference type="SAM" id="MobiDB-lite"/>
    </source>
</evidence>
<gene>
    <name evidence="1" type="primary">LIP1P</name>
    <name type="ORF">CHLREDRAFT_196092</name>
</gene>
<protein>
    <recommendedName>
        <fullName evidence="1">Lipoyl synthase, chloroplastic</fullName>
        <ecNumber evidence="1">2.8.1.8</ecNumber>
    </recommendedName>
    <alternativeName>
        <fullName evidence="1">Lipoate synthase</fullName>
        <shortName evidence="1">LS</shortName>
        <shortName evidence="1">Lip-syn</shortName>
    </alternativeName>
    <alternativeName>
        <fullName evidence="1">Lipoate synthase, plastidial</fullName>
        <shortName evidence="1">LIP1p</shortName>
    </alternativeName>
    <alternativeName>
        <fullName evidence="1">Lipoic acid synthase</fullName>
    </alternativeName>
</protein>